<dbReference type="EC" id="2.4.1.182" evidence="1"/>
<dbReference type="EMBL" id="CP000934">
    <property type="protein sequence ID" value="ACE85917.1"/>
    <property type="molecule type" value="Genomic_DNA"/>
</dbReference>
<dbReference type="RefSeq" id="WP_012486773.1">
    <property type="nucleotide sequence ID" value="NC_010995.1"/>
</dbReference>
<dbReference type="SMR" id="B3PBR1"/>
<dbReference type="STRING" id="498211.CJA_1125"/>
<dbReference type="CAZy" id="GT19">
    <property type="family name" value="Glycosyltransferase Family 19"/>
</dbReference>
<dbReference type="KEGG" id="cja:CJA_1125"/>
<dbReference type="eggNOG" id="COG0763">
    <property type="taxonomic scope" value="Bacteria"/>
</dbReference>
<dbReference type="HOGENOM" id="CLU_036577_3_0_6"/>
<dbReference type="OrthoDB" id="9801642at2"/>
<dbReference type="UniPathway" id="UPA00973"/>
<dbReference type="Proteomes" id="UP000001036">
    <property type="component" value="Chromosome"/>
</dbReference>
<dbReference type="GO" id="GO:0016020">
    <property type="term" value="C:membrane"/>
    <property type="evidence" value="ECO:0007669"/>
    <property type="project" value="GOC"/>
</dbReference>
<dbReference type="GO" id="GO:0008915">
    <property type="term" value="F:lipid-A-disaccharide synthase activity"/>
    <property type="evidence" value="ECO:0007669"/>
    <property type="project" value="UniProtKB-UniRule"/>
</dbReference>
<dbReference type="GO" id="GO:0005543">
    <property type="term" value="F:phospholipid binding"/>
    <property type="evidence" value="ECO:0007669"/>
    <property type="project" value="TreeGrafter"/>
</dbReference>
<dbReference type="GO" id="GO:0009245">
    <property type="term" value="P:lipid A biosynthetic process"/>
    <property type="evidence" value="ECO:0007669"/>
    <property type="project" value="UniProtKB-UniRule"/>
</dbReference>
<dbReference type="Gene3D" id="3.40.50.2000">
    <property type="entry name" value="Glycogen Phosphorylase B"/>
    <property type="match status" value="1"/>
</dbReference>
<dbReference type="HAMAP" id="MF_00392">
    <property type="entry name" value="LpxB"/>
    <property type="match status" value="1"/>
</dbReference>
<dbReference type="InterPro" id="IPR003835">
    <property type="entry name" value="Glyco_trans_19"/>
</dbReference>
<dbReference type="NCBIfam" id="TIGR00215">
    <property type="entry name" value="lpxB"/>
    <property type="match status" value="1"/>
</dbReference>
<dbReference type="PANTHER" id="PTHR30372">
    <property type="entry name" value="LIPID-A-DISACCHARIDE SYNTHASE"/>
    <property type="match status" value="1"/>
</dbReference>
<dbReference type="PANTHER" id="PTHR30372:SF4">
    <property type="entry name" value="LIPID-A-DISACCHARIDE SYNTHASE, MITOCHONDRIAL-RELATED"/>
    <property type="match status" value="1"/>
</dbReference>
<dbReference type="Pfam" id="PF02684">
    <property type="entry name" value="LpxB"/>
    <property type="match status" value="1"/>
</dbReference>
<dbReference type="SUPFAM" id="SSF53756">
    <property type="entry name" value="UDP-Glycosyltransferase/glycogen phosphorylase"/>
    <property type="match status" value="1"/>
</dbReference>
<organism>
    <name type="scientific">Cellvibrio japonicus (strain Ueda107)</name>
    <name type="common">Pseudomonas fluorescens subsp. cellulosa</name>
    <dbReference type="NCBI Taxonomy" id="498211"/>
    <lineage>
        <taxon>Bacteria</taxon>
        <taxon>Pseudomonadati</taxon>
        <taxon>Pseudomonadota</taxon>
        <taxon>Gammaproteobacteria</taxon>
        <taxon>Cellvibrionales</taxon>
        <taxon>Cellvibrionaceae</taxon>
        <taxon>Cellvibrio</taxon>
    </lineage>
</organism>
<protein>
    <recommendedName>
        <fullName evidence="1">Lipid-A-disaccharide synthase</fullName>
        <ecNumber evidence="1">2.4.1.182</ecNumber>
    </recommendedName>
</protein>
<evidence type="ECO:0000255" key="1">
    <source>
        <dbReference type="HAMAP-Rule" id="MF_00392"/>
    </source>
</evidence>
<reference key="1">
    <citation type="journal article" date="2008" name="J. Bacteriol.">
        <title>Insights into plant cell wall degradation from the genome sequence of the soil bacterium Cellvibrio japonicus.</title>
        <authorList>
            <person name="DeBoy R.T."/>
            <person name="Mongodin E.F."/>
            <person name="Fouts D.E."/>
            <person name="Tailford L.E."/>
            <person name="Khouri H."/>
            <person name="Emerson J.B."/>
            <person name="Mohamoud Y."/>
            <person name="Watkins K."/>
            <person name="Henrissat B."/>
            <person name="Gilbert H.J."/>
            <person name="Nelson K.E."/>
        </authorList>
    </citation>
    <scope>NUCLEOTIDE SEQUENCE [LARGE SCALE GENOMIC DNA]</scope>
    <source>
        <strain>Ueda107</strain>
    </source>
</reference>
<comment type="function">
    <text evidence="1">Condensation of UDP-2,3-diacylglucosamine and 2,3-diacylglucosamine-1-phosphate to form lipid A disaccharide, a precursor of lipid A, a phosphorylated glycolipid that anchors the lipopolysaccharide to the outer membrane of the cell.</text>
</comment>
<comment type="catalytic activity">
    <reaction evidence="1">
        <text>a lipid X + a UDP-2-N,3-O-bis[(3R)-3-hydroxyacyl]-alpha-D-glucosamine = a lipid A disaccharide + UDP + H(+)</text>
        <dbReference type="Rhea" id="RHEA:67828"/>
        <dbReference type="ChEBI" id="CHEBI:15378"/>
        <dbReference type="ChEBI" id="CHEBI:58223"/>
        <dbReference type="ChEBI" id="CHEBI:137748"/>
        <dbReference type="ChEBI" id="CHEBI:176338"/>
        <dbReference type="ChEBI" id="CHEBI:176343"/>
        <dbReference type="EC" id="2.4.1.182"/>
    </reaction>
</comment>
<comment type="pathway">
    <text evidence="1">Bacterial outer membrane biogenesis; LPS lipid A biosynthesis.</text>
</comment>
<comment type="similarity">
    <text evidence="1">Belongs to the LpxB family.</text>
</comment>
<accession>B3PBR1</accession>
<sequence>MSGHLHIGIVVGEASGDILGAALMTELRRHFPNAEFSGIGGPRMLELGFHSYFPQDRLAVMGLIEPLKRLPELLRIRKFLREHFTANPPSVFIGIDSPDFTIPLEGALKEKGIKTVHYVSPSVWAWRQKRIINIARSVDLMLTLLPFEARFYEEHGVPVEFVGHHLADAIPDNVDKTAARQLLGLPGQGRIVALLPGSRSSEVERMAELFFRTAVFCIEQDPSLHFVVPAANSDRYRQLHIELNDFVDFPIHLVNGHSQDAMAAADVLLVASGTVTLEALLLKKPMVVAYKMAPLTYRILSWLVKTPFVSLPNLLAQKMLVPELLQDKATPEALSAAVMNYFENPEQSMAVSQTFADMHRELKCNASARAADAIARLIKPAEAS</sequence>
<gene>
    <name evidence="1" type="primary">lpxB</name>
    <name type="ordered locus">CJA_1125</name>
</gene>
<proteinExistence type="inferred from homology"/>
<feature type="chain" id="PRO_1000191469" description="Lipid-A-disaccharide synthase">
    <location>
        <begin position="1"/>
        <end position="384"/>
    </location>
</feature>
<name>LPXB_CELJU</name>
<keyword id="KW-0328">Glycosyltransferase</keyword>
<keyword id="KW-0441">Lipid A biosynthesis</keyword>
<keyword id="KW-0444">Lipid biosynthesis</keyword>
<keyword id="KW-0443">Lipid metabolism</keyword>
<keyword id="KW-1185">Reference proteome</keyword>
<keyword id="KW-0808">Transferase</keyword>